<proteinExistence type="inferred from homology"/>
<reference key="1">
    <citation type="journal article" date="2008" name="J. Bacteriol.">
        <title>The pangenome structure of Escherichia coli: comparative genomic analysis of E. coli commensal and pathogenic isolates.</title>
        <authorList>
            <person name="Rasko D.A."/>
            <person name="Rosovitz M.J."/>
            <person name="Myers G.S.A."/>
            <person name="Mongodin E.F."/>
            <person name="Fricke W.F."/>
            <person name="Gajer P."/>
            <person name="Crabtree J."/>
            <person name="Sebaihia M."/>
            <person name="Thomson N.R."/>
            <person name="Chaudhuri R."/>
            <person name="Henderson I.R."/>
            <person name="Sperandio V."/>
            <person name="Ravel J."/>
        </authorList>
    </citation>
    <scope>NUCLEOTIDE SEQUENCE [LARGE SCALE GENOMIC DNA]</scope>
    <source>
        <strain>HS</strain>
    </source>
</reference>
<gene>
    <name evidence="1" type="primary">glgB</name>
    <name type="ordered locus">EcHS_A3632</name>
</gene>
<sequence>MSDRIDRDVINALIAGHFADPFSVLGMHKTTAGLEVRALLPDATDVWVIEPKTGRKLAKLECLDSRGFFSGVIPRRKNFFRYQLAVVWHGQQNLIDDPYRFGPLIQEMDAWLLSEGTHLRPYETLGAHADTMDGVTGTRFSVWAPNARRVSVVGQFNYWDGRRHPMRLRKESGIWELFIPGAHNGQLYKYEMIDANGNLRLKSDPYAFEAQMRPETASLICGLPEKVVQTEERKKANQFDAPISIYEVHLGSWRRHTDNNFWLSYRELADQLVPYAKWMGFTHLELLPINEHPFDGSWGYQPTGLYAPTRRFGTRDDFRYFIDAAHAAGLNVILDWVPGHFPTDDFALAEFDGTNLYEHSDPREGYHQDWNTLIYNYGRREVSNFLVGNALYWIERFGIDALRVDAVASMIYRDYSRKEGEWIPNEFGGRENLEAIEFLRNTNRILGEQVSGAVTMAEESTDFPGVSRPQDMGGLGFWYKWNLGWMHDTLDYMKLDPVYRQYHHDKLTFGILYNYTENFVLPLSHDEVVHGKKSILDRMPGDAWQKFANLRAYYGWMWAFPGKKLLFMGNEFAQGREWNHDASLDWHLLEGGDNWHHGVQRLVRDLNLTYRHHKAMHELDFDPYGFEWLVVDDKERSVLIFVRRDKEGNEIIVASNFTPVPRHDYRFGINQPGKWREILNTDSMHYHGSNAGNGGTVHSDEIASHGRQHSLSLTLPPLATIWLVREAE</sequence>
<protein>
    <recommendedName>
        <fullName evidence="1">1,4-alpha-glucan branching enzyme GlgB</fullName>
        <ecNumber evidence="1">2.4.1.18</ecNumber>
    </recommendedName>
    <alternativeName>
        <fullName evidence="1">1,4-alpha-D-glucan:1,4-alpha-D-glucan 6-glucosyl-transferase</fullName>
    </alternativeName>
    <alternativeName>
        <fullName evidence="1">Alpha-(1-&gt;4)-glucan branching enzyme</fullName>
    </alternativeName>
    <alternativeName>
        <fullName evidence="1">Glycogen branching enzyme</fullName>
        <shortName evidence="1">BE</shortName>
    </alternativeName>
</protein>
<keyword id="KW-0119">Carbohydrate metabolism</keyword>
<keyword id="KW-0320">Glycogen biosynthesis</keyword>
<keyword id="KW-0321">Glycogen metabolism</keyword>
<keyword id="KW-0328">Glycosyltransferase</keyword>
<keyword id="KW-0808">Transferase</keyword>
<accession>A8A5P2</accession>
<organism>
    <name type="scientific">Escherichia coli O9:H4 (strain HS)</name>
    <dbReference type="NCBI Taxonomy" id="331112"/>
    <lineage>
        <taxon>Bacteria</taxon>
        <taxon>Pseudomonadati</taxon>
        <taxon>Pseudomonadota</taxon>
        <taxon>Gammaproteobacteria</taxon>
        <taxon>Enterobacterales</taxon>
        <taxon>Enterobacteriaceae</taxon>
        <taxon>Escherichia</taxon>
    </lineage>
</organism>
<name>GLGB_ECOHS</name>
<evidence type="ECO:0000255" key="1">
    <source>
        <dbReference type="HAMAP-Rule" id="MF_00685"/>
    </source>
</evidence>
<feature type="chain" id="PRO_1000061990" description="1,4-alpha-glucan branching enzyme GlgB">
    <location>
        <begin position="1"/>
        <end position="728"/>
    </location>
</feature>
<feature type="active site" description="Nucleophile" evidence="1">
    <location>
        <position position="405"/>
    </location>
</feature>
<feature type="active site" description="Proton donor" evidence="1">
    <location>
        <position position="458"/>
    </location>
</feature>
<dbReference type="EC" id="2.4.1.18" evidence="1"/>
<dbReference type="EMBL" id="CP000802">
    <property type="protein sequence ID" value="ABV07846.1"/>
    <property type="molecule type" value="Genomic_DNA"/>
</dbReference>
<dbReference type="RefSeq" id="WP_001283723.1">
    <property type="nucleotide sequence ID" value="NC_009800.1"/>
</dbReference>
<dbReference type="SMR" id="A8A5P2"/>
<dbReference type="CAZy" id="CBM48">
    <property type="family name" value="Carbohydrate-Binding Module Family 48"/>
</dbReference>
<dbReference type="CAZy" id="GH13">
    <property type="family name" value="Glycoside Hydrolase Family 13"/>
</dbReference>
<dbReference type="GeneID" id="93778557"/>
<dbReference type="KEGG" id="ecx:EcHS_A3632"/>
<dbReference type="HOGENOM" id="CLU_004245_3_2_6"/>
<dbReference type="UniPathway" id="UPA00164"/>
<dbReference type="GO" id="GO:0005829">
    <property type="term" value="C:cytosol"/>
    <property type="evidence" value="ECO:0007669"/>
    <property type="project" value="TreeGrafter"/>
</dbReference>
<dbReference type="GO" id="GO:0003844">
    <property type="term" value="F:1,4-alpha-glucan branching enzyme activity"/>
    <property type="evidence" value="ECO:0007669"/>
    <property type="project" value="UniProtKB-UniRule"/>
</dbReference>
<dbReference type="GO" id="GO:0043169">
    <property type="term" value="F:cation binding"/>
    <property type="evidence" value="ECO:0007669"/>
    <property type="project" value="InterPro"/>
</dbReference>
<dbReference type="GO" id="GO:0004553">
    <property type="term" value="F:hydrolase activity, hydrolyzing O-glycosyl compounds"/>
    <property type="evidence" value="ECO:0007669"/>
    <property type="project" value="InterPro"/>
</dbReference>
<dbReference type="GO" id="GO:0005978">
    <property type="term" value="P:glycogen biosynthetic process"/>
    <property type="evidence" value="ECO:0007669"/>
    <property type="project" value="UniProtKB-UniRule"/>
</dbReference>
<dbReference type="CDD" id="cd11322">
    <property type="entry name" value="AmyAc_Glg_BE"/>
    <property type="match status" value="1"/>
</dbReference>
<dbReference type="CDD" id="cd02855">
    <property type="entry name" value="E_set_GBE_prok_N"/>
    <property type="match status" value="1"/>
</dbReference>
<dbReference type="FunFam" id="2.60.40.10:FF:000169">
    <property type="entry name" value="1,4-alpha-glucan branching enzyme GlgB"/>
    <property type="match status" value="1"/>
</dbReference>
<dbReference type="FunFam" id="2.60.40.10:FF:000331">
    <property type="entry name" value="1,4-alpha-glucan branching enzyme GlgB"/>
    <property type="match status" value="1"/>
</dbReference>
<dbReference type="FunFam" id="2.60.40.1180:FF:000002">
    <property type="entry name" value="1,4-alpha-glucan branching enzyme GlgB"/>
    <property type="match status" value="1"/>
</dbReference>
<dbReference type="FunFam" id="3.20.20.80:FF:000003">
    <property type="entry name" value="1,4-alpha-glucan branching enzyme GlgB"/>
    <property type="match status" value="1"/>
</dbReference>
<dbReference type="Gene3D" id="3.20.20.80">
    <property type="entry name" value="Glycosidases"/>
    <property type="match status" value="1"/>
</dbReference>
<dbReference type="Gene3D" id="2.60.40.1180">
    <property type="entry name" value="Golgi alpha-mannosidase II"/>
    <property type="match status" value="1"/>
</dbReference>
<dbReference type="Gene3D" id="2.60.40.10">
    <property type="entry name" value="Immunoglobulins"/>
    <property type="match status" value="2"/>
</dbReference>
<dbReference type="HAMAP" id="MF_00685">
    <property type="entry name" value="GlgB"/>
    <property type="match status" value="1"/>
</dbReference>
<dbReference type="InterPro" id="IPR006048">
    <property type="entry name" value="A-amylase/branching_C"/>
</dbReference>
<dbReference type="InterPro" id="IPR037439">
    <property type="entry name" value="Branching_enzy"/>
</dbReference>
<dbReference type="InterPro" id="IPR006407">
    <property type="entry name" value="GlgB"/>
</dbReference>
<dbReference type="InterPro" id="IPR054169">
    <property type="entry name" value="GlgB_N"/>
</dbReference>
<dbReference type="InterPro" id="IPR044143">
    <property type="entry name" value="GlgB_N_E_set_prok"/>
</dbReference>
<dbReference type="InterPro" id="IPR006047">
    <property type="entry name" value="Glyco_hydro_13_cat_dom"/>
</dbReference>
<dbReference type="InterPro" id="IPR004193">
    <property type="entry name" value="Glyco_hydro_13_N"/>
</dbReference>
<dbReference type="InterPro" id="IPR013780">
    <property type="entry name" value="Glyco_hydro_b"/>
</dbReference>
<dbReference type="InterPro" id="IPR017853">
    <property type="entry name" value="Glycoside_hydrolase_SF"/>
</dbReference>
<dbReference type="InterPro" id="IPR013783">
    <property type="entry name" value="Ig-like_fold"/>
</dbReference>
<dbReference type="InterPro" id="IPR014756">
    <property type="entry name" value="Ig_E-set"/>
</dbReference>
<dbReference type="NCBIfam" id="TIGR01515">
    <property type="entry name" value="branching_enzym"/>
    <property type="match status" value="1"/>
</dbReference>
<dbReference type="NCBIfam" id="NF003811">
    <property type="entry name" value="PRK05402.1"/>
    <property type="match status" value="1"/>
</dbReference>
<dbReference type="NCBIfam" id="NF008967">
    <property type="entry name" value="PRK12313.1"/>
    <property type="match status" value="1"/>
</dbReference>
<dbReference type="PANTHER" id="PTHR43651">
    <property type="entry name" value="1,4-ALPHA-GLUCAN-BRANCHING ENZYME"/>
    <property type="match status" value="1"/>
</dbReference>
<dbReference type="PANTHER" id="PTHR43651:SF3">
    <property type="entry name" value="1,4-ALPHA-GLUCAN-BRANCHING ENZYME"/>
    <property type="match status" value="1"/>
</dbReference>
<dbReference type="Pfam" id="PF00128">
    <property type="entry name" value="Alpha-amylase"/>
    <property type="match status" value="1"/>
</dbReference>
<dbReference type="Pfam" id="PF02806">
    <property type="entry name" value="Alpha-amylase_C"/>
    <property type="match status" value="1"/>
</dbReference>
<dbReference type="Pfam" id="PF02922">
    <property type="entry name" value="CBM_48"/>
    <property type="match status" value="1"/>
</dbReference>
<dbReference type="Pfam" id="PF22019">
    <property type="entry name" value="GlgB_N"/>
    <property type="match status" value="1"/>
</dbReference>
<dbReference type="PIRSF" id="PIRSF000463">
    <property type="entry name" value="GlgB"/>
    <property type="match status" value="1"/>
</dbReference>
<dbReference type="SMART" id="SM00642">
    <property type="entry name" value="Aamy"/>
    <property type="match status" value="1"/>
</dbReference>
<dbReference type="SUPFAM" id="SSF51445">
    <property type="entry name" value="(Trans)glycosidases"/>
    <property type="match status" value="1"/>
</dbReference>
<dbReference type="SUPFAM" id="SSF81296">
    <property type="entry name" value="E set domains"/>
    <property type="match status" value="2"/>
</dbReference>
<dbReference type="SUPFAM" id="SSF51011">
    <property type="entry name" value="Glycosyl hydrolase domain"/>
    <property type="match status" value="1"/>
</dbReference>
<comment type="function">
    <text evidence="1">Catalyzes the formation of the alpha-1,6-glucosidic linkages in glycogen by scission of a 1,4-alpha-linked oligosaccharide from growing alpha-1,4-glucan chains and the subsequent attachment of the oligosaccharide to the alpha-1,6 position.</text>
</comment>
<comment type="catalytic activity">
    <reaction evidence="1">
        <text>Transfers a segment of a (1-&gt;4)-alpha-D-glucan chain to a primary hydroxy group in a similar glucan chain.</text>
        <dbReference type="EC" id="2.4.1.18"/>
    </reaction>
</comment>
<comment type="pathway">
    <text evidence="1">Glycan biosynthesis; glycogen biosynthesis.</text>
</comment>
<comment type="subunit">
    <text evidence="1">Monomer.</text>
</comment>
<comment type="similarity">
    <text evidence="1">Belongs to the glycosyl hydrolase 13 family. GlgB subfamily.</text>
</comment>